<reference key="1">
    <citation type="submission" date="2006-08" db="EMBL/GenBank/DDBJ databases">
        <title>Complete sequence of Shewanella sp. MR-4.</title>
        <authorList>
            <consortium name="US DOE Joint Genome Institute"/>
            <person name="Copeland A."/>
            <person name="Lucas S."/>
            <person name="Lapidus A."/>
            <person name="Barry K."/>
            <person name="Detter J.C."/>
            <person name="Glavina del Rio T."/>
            <person name="Hammon N."/>
            <person name="Israni S."/>
            <person name="Dalin E."/>
            <person name="Tice H."/>
            <person name="Pitluck S."/>
            <person name="Kiss H."/>
            <person name="Brettin T."/>
            <person name="Bruce D."/>
            <person name="Han C."/>
            <person name="Tapia R."/>
            <person name="Gilna P."/>
            <person name="Schmutz J."/>
            <person name="Larimer F."/>
            <person name="Land M."/>
            <person name="Hauser L."/>
            <person name="Kyrpides N."/>
            <person name="Mikhailova N."/>
            <person name="Nealson K."/>
            <person name="Konstantinidis K."/>
            <person name="Klappenbach J."/>
            <person name="Tiedje J."/>
            <person name="Richardson P."/>
        </authorList>
    </citation>
    <scope>NUCLEOTIDE SEQUENCE [LARGE SCALE GENOMIC DNA]</scope>
    <source>
        <strain>MR-4</strain>
    </source>
</reference>
<evidence type="ECO:0000255" key="1">
    <source>
        <dbReference type="HAMAP-Rule" id="MF_00286"/>
    </source>
</evidence>
<feature type="chain" id="PRO_0000298411" description="Disulfide bond formation protein B">
    <location>
        <begin position="1"/>
        <end position="175"/>
    </location>
</feature>
<feature type="topological domain" description="Cytoplasmic" evidence="1">
    <location>
        <begin position="1"/>
        <end position="13"/>
    </location>
</feature>
<feature type="transmembrane region" description="Helical" evidence="1">
    <location>
        <begin position="14"/>
        <end position="30"/>
    </location>
</feature>
<feature type="topological domain" description="Periplasmic" evidence="1">
    <location>
        <begin position="31"/>
        <end position="48"/>
    </location>
</feature>
<feature type="transmembrane region" description="Helical" evidence="1">
    <location>
        <begin position="49"/>
        <end position="64"/>
    </location>
</feature>
<feature type="topological domain" description="Cytoplasmic" evidence="1">
    <location>
        <begin position="65"/>
        <end position="71"/>
    </location>
</feature>
<feature type="transmembrane region" description="Helical" evidence="1">
    <location>
        <begin position="72"/>
        <end position="89"/>
    </location>
</feature>
<feature type="topological domain" description="Periplasmic" evidence="1">
    <location>
        <begin position="90"/>
        <end position="144"/>
    </location>
</feature>
<feature type="transmembrane region" description="Helical" evidence="1">
    <location>
        <begin position="145"/>
        <end position="163"/>
    </location>
</feature>
<feature type="topological domain" description="Cytoplasmic" evidence="1">
    <location>
        <begin position="164"/>
        <end position="175"/>
    </location>
</feature>
<feature type="disulfide bond" description="Redox-active" evidence="1">
    <location>
        <begin position="40"/>
        <end position="43"/>
    </location>
</feature>
<feature type="disulfide bond" description="Redox-active" evidence="1">
    <location>
        <begin position="104"/>
        <end position="130"/>
    </location>
</feature>
<gene>
    <name evidence="1" type="primary">dsbB</name>
    <name type="ordered locus">Shewmr4_1566</name>
</gene>
<comment type="function">
    <text evidence="1">Required for disulfide bond formation in some periplasmic proteins. Acts by oxidizing the DsbA protein.</text>
</comment>
<comment type="subcellular location">
    <subcellularLocation>
        <location evidence="1">Cell inner membrane</location>
        <topology evidence="1">Multi-pass membrane protein</topology>
    </subcellularLocation>
</comment>
<comment type="similarity">
    <text evidence="1">Belongs to the DsbB family.</text>
</comment>
<proteinExistence type="inferred from homology"/>
<dbReference type="EMBL" id="CP000446">
    <property type="protein sequence ID" value="ABI38644.1"/>
    <property type="molecule type" value="Genomic_DNA"/>
</dbReference>
<dbReference type="RefSeq" id="WP_011622347.1">
    <property type="nucleotide sequence ID" value="NC_008321.1"/>
</dbReference>
<dbReference type="KEGG" id="she:Shewmr4_1566"/>
<dbReference type="HOGENOM" id="CLU_098660_2_0_6"/>
<dbReference type="GO" id="GO:0005886">
    <property type="term" value="C:plasma membrane"/>
    <property type="evidence" value="ECO:0007669"/>
    <property type="project" value="UniProtKB-SubCell"/>
</dbReference>
<dbReference type="GO" id="GO:0009055">
    <property type="term" value="F:electron transfer activity"/>
    <property type="evidence" value="ECO:0007669"/>
    <property type="project" value="UniProtKB-UniRule"/>
</dbReference>
<dbReference type="GO" id="GO:0015035">
    <property type="term" value="F:protein-disulfide reductase activity"/>
    <property type="evidence" value="ECO:0007669"/>
    <property type="project" value="UniProtKB-UniRule"/>
</dbReference>
<dbReference type="GO" id="GO:0006457">
    <property type="term" value="P:protein folding"/>
    <property type="evidence" value="ECO:0007669"/>
    <property type="project" value="InterPro"/>
</dbReference>
<dbReference type="FunFam" id="1.20.1550.10:FF:000006">
    <property type="entry name" value="Disulfide bond formation protein B"/>
    <property type="match status" value="1"/>
</dbReference>
<dbReference type="Gene3D" id="1.20.1550.10">
    <property type="entry name" value="DsbB-like"/>
    <property type="match status" value="1"/>
</dbReference>
<dbReference type="HAMAP" id="MF_00286">
    <property type="entry name" value="DsbB"/>
    <property type="match status" value="1"/>
</dbReference>
<dbReference type="InterPro" id="IPR003752">
    <property type="entry name" value="DiS_bond_form_DsbB/BdbC"/>
</dbReference>
<dbReference type="InterPro" id="IPR022920">
    <property type="entry name" value="Disulphide_bond_form_DsbB"/>
</dbReference>
<dbReference type="InterPro" id="IPR050183">
    <property type="entry name" value="DsbB"/>
</dbReference>
<dbReference type="InterPro" id="IPR023380">
    <property type="entry name" value="DsbB-like_sf"/>
</dbReference>
<dbReference type="NCBIfam" id="NF002485">
    <property type="entry name" value="PRK01749.1"/>
    <property type="match status" value="1"/>
</dbReference>
<dbReference type="PANTHER" id="PTHR36570">
    <property type="entry name" value="DISULFIDE BOND FORMATION PROTEIN B"/>
    <property type="match status" value="1"/>
</dbReference>
<dbReference type="PANTHER" id="PTHR36570:SF2">
    <property type="entry name" value="DISULFIDE BOND FORMATION PROTEIN B"/>
    <property type="match status" value="1"/>
</dbReference>
<dbReference type="Pfam" id="PF02600">
    <property type="entry name" value="DsbB"/>
    <property type="match status" value="1"/>
</dbReference>
<dbReference type="SUPFAM" id="SSF158442">
    <property type="entry name" value="DsbB-like"/>
    <property type="match status" value="1"/>
</dbReference>
<name>DSBB_SHESM</name>
<protein>
    <recommendedName>
        <fullName evidence="1">Disulfide bond formation protein B</fullName>
    </recommendedName>
    <alternativeName>
        <fullName evidence="1">Disulfide oxidoreductase</fullName>
    </alternativeName>
</protein>
<accession>Q0HJX3</accession>
<sequence length="175" mass="19338">MTAFTRFAHSRASWLILTGSAIALEAAALYFQYVMKLDPCVMCIYQRLAVFGILAAGLIGMTAPKYRIVRILGALGWAVSATWGLKLALALVDMQNNPSPFSTCSFLPEFPAWMPLHEWFPSVMLPTGMCTDVPWQFMGVTMAEWMVVAFSGYLVALLLFIVPILSGSNKPSLYK</sequence>
<organism>
    <name type="scientific">Shewanella sp. (strain MR-4)</name>
    <dbReference type="NCBI Taxonomy" id="60480"/>
    <lineage>
        <taxon>Bacteria</taxon>
        <taxon>Pseudomonadati</taxon>
        <taxon>Pseudomonadota</taxon>
        <taxon>Gammaproteobacteria</taxon>
        <taxon>Alteromonadales</taxon>
        <taxon>Shewanellaceae</taxon>
        <taxon>Shewanella</taxon>
    </lineage>
</organism>
<keyword id="KW-0997">Cell inner membrane</keyword>
<keyword id="KW-1003">Cell membrane</keyword>
<keyword id="KW-0143">Chaperone</keyword>
<keyword id="KW-1015">Disulfide bond</keyword>
<keyword id="KW-0249">Electron transport</keyword>
<keyword id="KW-0472">Membrane</keyword>
<keyword id="KW-0560">Oxidoreductase</keyword>
<keyword id="KW-0676">Redox-active center</keyword>
<keyword id="KW-0812">Transmembrane</keyword>
<keyword id="KW-1133">Transmembrane helix</keyword>
<keyword id="KW-0813">Transport</keyword>